<proteinExistence type="inferred from homology"/>
<name>RSSA_ASPFU</name>
<accession>Q4WYK1</accession>
<feature type="chain" id="PRO_0000371619" description="Small ribosomal subunit protein uS2">
    <location>
        <begin position="1"/>
        <end position="297"/>
    </location>
</feature>
<feature type="region of interest" description="Disordered" evidence="2">
    <location>
        <begin position="252"/>
        <end position="297"/>
    </location>
</feature>
<feature type="compositionally biased region" description="Low complexity" evidence="2">
    <location>
        <begin position="256"/>
        <end position="289"/>
    </location>
</feature>
<evidence type="ECO:0000255" key="1">
    <source>
        <dbReference type="HAMAP-Rule" id="MF_03015"/>
    </source>
</evidence>
<evidence type="ECO:0000256" key="2">
    <source>
        <dbReference type="SAM" id="MobiDB-lite"/>
    </source>
</evidence>
<evidence type="ECO:0000305" key="3"/>
<sequence length="297" mass="32122">MAPSQLPPIFNPTPQDIEMLLAAQCHLGSKNLQVHMEPYLWKTRPDGVNVINIGKTWEKILLAARIIAAIENPADICVISARPYGQRAVLKFASHTGATAIAGRFTPGNFTNYITRSFKEPRLIIVTDPRTDAQAIKEASYVNIPVIALCDTDSPTEFVDVAIPTNNKGRHAIGLIWWLLAREVLRLRGTLATRETEWDVVVDLYFYRDPEAEENKEIADEAKVPGAEEIGAGAVESGFAGENWDTQAPGAGVPGTAFSAATAAPTSWEADGGDWAASSAAPAGESWAETQPAEAKW</sequence>
<protein>
    <recommendedName>
        <fullName evidence="1">Small ribosomal subunit protein uS2</fullName>
    </recommendedName>
    <alternativeName>
        <fullName evidence="3">40S ribosomal protein S0</fullName>
    </alternativeName>
</protein>
<organism>
    <name type="scientific">Aspergillus fumigatus (strain ATCC MYA-4609 / CBS 101355 / FGSC A1100 / Af293)</name>
    <name type="common">Neosartorya fumigata</name>
    <dbReference type="NCBI Taxonomy" id="330879"/>
    <lineage>
        <taxon>Eukaryota</taxon>
        <taxon>Fungi</taxon>
        <taxon>Dikarya</taxon>
        <taxon>Ascomycota</taxon>
        <taxon>Pezizomycotina</taxon>
        <taxon>Eurotiomycetes</taxon>
        <taxon>Eurotiomycetidae</taxon>
        <taxon>Eurotiales</taxon>
        <taxon>Aspergillaceae</taxon>
        <taxon>Aspergillus</taxon>
        <taxon>Aspergillus subgen. Fumigati</taxon>
    </lineage>
</organism>
<gene>
    <name type="primary">rps0</name>
    <name type="ORF">AFUA_3G13320</name>
</gene>
<dbReference type="EMBL" id="AAHF01000002">
    <property type="protein sequence ID" value="EAL92252.1"/>
    <property type="molecule type" value="Genomic_DNA"/>
</dbReference>
<dbReference type="RefSeq" id="XP_754290.1">
    <property type="nucleotide sequence ID" value="XM_749197.1"/>
</dbReference>
<dbReference type="SMR" id="Q4WYK1"/>
<dbReference type="FunCoup" id="Q4WYK1">
    <property type="interactions" value="1242"/>
</dbReference>
<dbReference type="STRING" id="330879.Q4WYK1"/>
<dbReference type="SwissPalm" id="Q4WYK1"/>
<dbReference type="EnsemblFungi" id="EAL92252">
    <property type="protein sequence ID" value="EAL92252"/>
    <property type="gene ID" value="AFUA_3G13320"/>
</dbReference>
<dbReference type="GeneID" id="3511729"/>
<dbReference type="KEGG" id="afm:AFUA_3G13320"/>
<dbReference type="VEuPathDB" id="FungiDB:Afu3g13320"/>
<dbReference type="eggNOG" id="KOG0830">
    <property type="taxonomic scope" value="Eukaryota"/>
</dbReference>
<dbReference type="HOGENOM" id="CLU_058171_0_1_1"/>
<dbReference type="InParanoid" id="Q4WYK1"/>
<dbReference type="OMA" id="QCHLGAK"/>
<dbReference type="OrthoDB" id="414863at2759"/>
<dbReference type="Proteomes" id="UP000002530">
    <property type="component" value="Chromosome 3"/>
</dbReference>
<dbReference type="GO" id="GO:0022627">
    <property type="term" value="C:cytosolic small ribosomal subunit"/>
    <property type="evidence" value="ECO:0000318"/>
    <property type="project" value="GO_Central"/>
</dbReference>
<dbReference type="GO" id="GO:0003735">
    <property type="term" value="F:structural constituent of ribosome"/>
    <property type="evidence" value="ECO:0000318"/>
    <property type="project" value="GO_Central"/>
</dbReference>
<dbReference type="GO" id="GO:0002181">
    <property type="term" value="P:cytoplasmic translation"/>
    <property type="evidence" value="ECO:0000318"/>
    <property type="project" value="GO_Central"/>
</dbReference>
<dbReference type="GO" id="GO:0000028">
    <property type="term" value="P:ribosomal small subunit assembly"/>
    <property type="evidence" value="ECO:0000318"/>
    <property type="project" value="GO_Central"/>
</dbReference>
<dbReference type="CDD" id="cd01425">
    <property type="entry name" value="RPS2"/>
    <property type="match status" value="1"/>
</dbReference>
<dbReference type="FunFam" id="3.40.50.10490:FF:000010">
    <property type="entry name" value="40S ribosomal protein S0"/>
    <property type="match status" value="1"/>
</dbReference>
<dbReference type="Gene3D" id="3.40.50.10490">
    <property type="entry name" value="Glucose-6-phosphate isomerase like protein, domain 1"/>
    <property type="match status" value="1"/>
</dbReference>
<dbReference type="HAMAP" id="MF_03015">
    <property type="entry name" value="Ribosomal_S2_euk"/>
    <property type="match status" value="1"/>
</dbReference>
<dbReference type="InterPro" id="IPR001865">
    <property type="entry name" value="Ribosomal_uS2"/>
</dbReference>
<dbReference type="InterPro" id="IPR032281">
    <property type="entry name" value="Ribosomal_uS2_C"/>
</dbReference>
<dbReference type="InterPro" id="IPR018130">
    <property type="entry name" value="Ribosomal_uS2_CS"/>
</dbReference>
<dbReference type="InterPro" id="IPR027498">
    <property type="entry name" value="Ribosomal_uS2_euk"/>
</dbReference>
<dbReference type="InterPro" id="IPR005707">
    <property type="entry name" value="Ribosomal_uS2_euk/arc"/>
</dbReference>
<dbReference type="InterPro" id="IPR023591">
    <property type="entry name" value="Ribosomal_uS2_flav_dom_sf"/>
</dbReference>
<dbReference type="NCBIfam" id="TIGR01012">
    <property type="entry name" value="uS2_euk_arch"/>
    <property type="match status" value="1"/>
</dbReference>
<dbReference type="PANTHER" id="PTHR11489">
    <property type="entry name" value="40S RIBOSOMAL PROTEIN SA"/>
    <property type="match status" value="1"/>
</dbReference>
<dbReference type="Pfam" id="PF16122">
    <property type="entry name" value="40S_SA_C"/>
    <property type="match status" value="1"/>
</dbReference>
<dbReference type="Pfam" id="PF00318">
    <property type="entry name" value="Ribosomal_S2"/>
    <property type="match status" value="2"/>
</dbReference>
<dbReference type="PRINTS" id="PR00395">
    <property type="entry name" value="RIBOSOMALS2"/>
</dbReference>
<dbReference type="SUPFAM" id="SSF52313">
    <property type="entry name" value="Ribosomal protein S2"/>
    <property type="match status" value="1"/>
</dbReference>
<dbReference type="PROSITE" id="PS00963">
    <property type="entry name" value="RIBOSOMAL_S2_2"/>
    <property type="match status" value="1"/>
</dbReference>
<comment type="function">
    <text evidence="1">Required for the assembly and/or stability of the 40S ribosomal subunit. Required for the processing of the 20S rRNA-precursor to mature 18S rRNA in a late step of the maturation of 40S ribosomal subunits.</text>
</comment>
<comment type="subunit">
    <text evidence="1">Component of the small ribosomal subunit. Mature ribosomes consist of a small (40S) and a large (60S) subunit. The 40S subunit contains about 33 different proteins and 1 molecule of RNA (18S). The 60S subunit contains about 49 different proteins and 3 molecules of RNA (25S, 5.8S and 5S). Interacts with rps21.</text>
</comment>
<comment type="subcellular location">
    <subcellularLocation>
        <location evidence="1">Cytoplasm</location>
    </subcellularLocation>
</comment>
<comment type="similarity">
    <text evidence="1">Belongs to the universal ribosomal protein uS2 family.</text>
</comment>
<reference key="1">
    <citation type="journal article" date="2005" name="Nature">
        <title>Genomic sequence of the pathogenic and allergenic filamentous fungus Aspergillus fumigatus.</title>
        <authorList>
            <person name="Nierman W.C."/>
            <person name="Pain A."/>
            <person name="Anderson M.J."/>
            <person name="Wortman J.R."/>
            <person name="Kim H.S."/>
            <person name="Arroyo J."/>
            <person name="Berriman M."/>
            <person name="Abe K."/>
            <person name="Archer D.B."/>
            <person name="Bermejo C."/>
            <person name="Bennett J.W."/>
            <person name="Bowyer P."/>
            <person name="Chen D."/>
            <person name="Collins M."/>
            <person name="Coulsen R."/>
            <person name="Davies R."/>
            <person name="Dyer P.S."/>
            <person name="Farman M.L."/>
            <person name="Fedorova N."/>
            <person name="Fedorova N.D."/>
            <person name="Feldblyum T.V."/>
            <person name="Fischer R."/>
            <person name="Fosker N."/>
            <person name="Fraser A."/>
            <person name="Garcia J.L."/>
            <person name="Garcia M.J."/>
            <person name="Goble A."/>
            <person name="Goldman G.H."/>
            <person name="Gomi K."/>
            <person name="Griffith-Jones S."/>
            <person name="Gwilliam R."/>
            <person name="Haas B.J."/>
            <person name="Haas H."/>
            <person name="Harris D.E."/>
            <person name="Horiuchi H."/>
            <person name="Huang J."/>
            <person name="Humphray S."/>
            <person name="Jimenez J."/>
            <person name="Keller N."/>
            <person name="Khouri H."/>
            <person name="Kitamoto K."/>
            <person name="Kobayashi T."/>
            <person name="Konzack S."/>
            <person name="Kulkarni R."/>
            <person name="Kumagai T."/>
            <person name="Lafton A."/>
            <person name="Latge J.-P."/>
            <person name="Li W."/>
            <person name="Lord A."/>
            <person name="Lu C."/>
            <person name="Majoros W.H."/>
            <person name="May G.S."/>
            <person name="Miller B.L."/>
            <person name="Mohamoud Y."/>
            <person name="Molina M."/>
            <person name="Monod M."/>
            <person name="Mouyna I."/>
            <person name="Mulligan S."/>
            <person name="Murphy L.D."/>
            <person name="O'Neil S."/>
            <person name="Paulsen I."/>
            <person name="Penalva M.A."/>
            <person name="Pertea M."/>
            <person name="Price C."/>
            <person name="Pritchard B.L."/>
            <person name="Quail M.A."/>
            <person name="Rabbinowitsch E."/>
            <person name="Rawlins N."/>
            <person name="Rajandream M.A."/>
            <person name="Reichard U."/>
            <person name="Renauld H."/>
            <person name="Robson G.D."/>
            <person name="Rodriguez de Cordoba S."/>
            <person name="Rodriguez-Pena J.M."/>
            <person name="Ronning C.M."/>
            <person name="Rutter S."/>
            <person name="Salzberg S.L."/>
            <person name="Sanchez M."/>
            <person name="Sanchez-Ferrero J.C."/>
            <person name="Saunders D."/>
            <person name="Seeger K."/>
            <person name="Squares R."/>
            <person name="Squares S."/>
            <person name="Takeuchi M."/>
            <person name="Tekaia F."/>
            <person name="Turner G."/>
            <person name="Vazquez de Aldana C.R."/>
            <person name="Weidman J."/>
            <person name="White O."/>
            <person name="Woodward J.R."/>
            <person name="Yu J.-H."/>
            <person name="Fraser C.M."/>
            <person name="Galagan J.E."/>
            <person name="Asai K."/>
            <person name="Machida M."/>
            <person name="Hall N."/>
            <person name="Barrell B.G."/>
            <person name="Denning D.W."/>
        </authorList>
    </citation>
    <scope>NUCLEOTIDE SEQUENCE [LARGE SCALE GENOMIC DNA]</scope>
    <source>
        <strain>ATCC MYA-4609 / CBS 101355 / FGSC A1100 / Af293</strain>
    </source>
</reference>
<keyword id="KW-0963">Cytoplasm</keyword>
<keyword id="KW-1185">Reference proteome</keyword>
<keyword id="KW-0687">Ribonucleoprotein</keyword>
<keyword id="KW-0689">Ribosomal protein</keyword>